<reference key="1">
    <citation type="journal article" date="2008" name="Genome Res.">
        <title>Chlamydia trachomatis: genome sequence analysis of lymphogranuloma venereum isolates.</title>
        <authorList>
            <person name="Thomson N.R."/>
            <person name="Holden M.T.G."/>
            <person name="Carder C."/>
            <person name="Lennard N."/>
            <person name="Lockey S.J."/>
            <person name="Marsh P."/>
            <person name="Skipp P."/>
            <person name="O'Connor C.D."/>
            <person name="Goodhead I."/>
            <person name="Norbertzcak H."/>
            <person name="Harris B."/>
            <person name="Ormond D."/>
            <person name="Rance R."/>
            <person name="Quail M.A."/>
            <person name="Parkhill J."/>
            <person name="Stephens R.S."/>
            <person name="Clarke I.N."/>
        </authorList>
    </citation>
    <scope>NUCLEOTIDE SEQUENCE [LARGE SCALE GENOMIC DNA]</scope>
    <source>
        <strain>ATCC VR-902B / DSM 19102 / 434/Bu</strain>
    </source>
</reference>
<proteinExistence type="inferred from homology"/>
<organism>
    <name type="scientific">Chlamydia trachomatis serovar L2 (strain ATCC VR-902B / DSM 19102 / 434/Bu)</name>
    <dbReference type="NCBI Taxonomy" id="471472"/>
    <lineage>
        <taxon>Bacteria</taxon>
        <taxon>Pseudomonadati</taxon>
        <taxon>Chlamydiota</taxon>
        <taxon>Chlamydiia</taxon>
        <taxon>Chlamydiales</taxon>
        <taxon>Chlamydiaceae</taxon>
        <taxon>Chlamydia/Chlamydophila group</taxon>
        <taxon>Chlamydia</taxon>
    </lineage>
</organism>
<comment type="function">
    <text evidence="1">One of the primary rRNA binding proteins, it binds directly near the 3'-end of the 23S rRNA, where it nucleates assembly of the 50S subunit.</text>
</comment>
<comment type="subunit">
    <text evidence="1">Part of the 50S ribosomal subunit. Forms a cluster with proteins L14 and L19.</text>
</comment>
<comment type="similarity">
    <text evidence="1">Belongs to the universal ribosomal protein uL3 family.</text>
</comment>
<protein>
    <recommendedName>
        <fullName evidence="1">Large ribosomal subunit protein uL3</fullName>
    </recommendedName>
    <alternativeName>
        <fullName evidence="2">50S ribosomal protein L3</fullName>
    </alternativeName>
</protein>
<evidence type="ECO:0000255" key="1">
    <source>
        <dbReference type="HAMAP-Rule" id="MF_01325"/>
    </source>
</evidence>
<evidence type="ECO:0000305" key="2"/>
<sequence>MRSQLSLIGKKEGMMHVFDKNGNLVACSVISVDANVVAQLKTASSDGYNAVQIGADVVQAPEKTIEKRFSKALLGHFKKSGGRACRVLKEVVVSEEAVQSVSLGDEFGLEIFDGVSNVDICGISKGKGFQGVMKKFGFRGGPKSHGSGFHRHAGSIGMRSTPGRCFPGSKRPSHMGCDRVTVKNLEVVKVDLDRKVMLVKGAIPGFKGSVVVVKRSCGVEG</sequence>
<dbReference type="EMBL" id="AM884176">
    <property type="protein sequence ID" value="CAP04228.1"/>
    <property type="molecule type" value="Genomic_DNA"/>
</dbReference>
<dbReference type="RefSeq" id="WP_009873876.1">
    <property type="nucleotide sequence ID" value="NC_010287.1"/>
</dbReference>
<dbReference type="RefSeq" id="YP_001654861.1">
    <property type="nucleotide sequence ID" value="NC_010287.1"/>
</dbReference>
<dbReference type="SMR" id="B0B8A2"/>
<dbReference type="KEGG" id="ctb:CTL0790"/>
<dbReference type="PATRIC" id="fig|471472.4.peg.846"/>
<dbReference type="HOGENOM" id="CLU_044142_4_1_0"/>
<dbReference type="Proteomes" id="UP001154402">
    <property type="component" value="Chromosome"/>
</dbReference>
<dbReference type="GO" id="GO:0022625">
    <property type="term" value="C:cytosolic large ribosomal subunit"/>
    <property type="evidence" value="ECO:0007669"/>
    <property type="project" value="TreeGrafter"/>
</dbReference>
<dbReference type="GO" id="GO:0019843">
    <property type="term" value="F:rRNA binding"/>
    <property type="evidence" value="ECO:0007669"/>
    <property type="project" value="UniProtKB-UniRule"/>
</dbReference>
<dbReference type="GO" id="GO:0003735">
    <property type="term" value="F:structural constituent of ribosome"/>
    <property type="evidence" value="ECO:0007669"/>
    <property type="project" value="InterPro"/>
</dbReference>
<dbReference type="GO" id="GO:0006412">
    <property type="term" value="P:translation"/>
    <property type="evidence" value="ECO:0007669"/>
    <property type="project" value="UniProtKB-UniRule"/>
</dbReference>
<dbReference type="FunFam" id="2.40.30.10:FF:000004">
    <property type="entry name" value="50S ribosomal protein L3"/>
    <property type="match status" value="1"/>
</dbReference>
<dbReference type="Gene3D" id="3.30.160.810">
    <property type="match status" value="1"/>
</dbReference>
<dbReference type="Gene3D" id="2.40.30.10">
    <property type="entry name" value="Translation factors"/>
    <property type="match status" value="1"/>
</dbReference>
<dbReference type="HAMAP" id="MF_01325_B">
    <property type="entry name" value="Ribosomal_uL3_B"/>
    <property type="match status" value="1"/>
</dbReference>
<dbReference type="InterPro" id="IPR000597">
    <property type="entry name" value="Ribosomal_uL3"/>
</dbReference>
<dbReference type="InterPro" id="IPR019927">
    <property type="entry name" value="Ribosomal_uL3_bac/org-type"/>
</dbReference>
<dbReference type="InterPro" id="IPR009000">
    <property type="entry name" value="Transl_B-barrel_sf"/>
</dbReference>
<dbReference type="NCBIfam" id="TIGR03625">
    <property type="entry name" value="L3_bact"/>
    <property type="match status" value="1"/>
</dbReference>
<dbReference type="PANTHER" id="PTHR11229">
    <property type="entry name" value="50S RIBOSOMAL PROTEIN L3"/>
    <property type="match status" value="1"/>
</dbReference>
<dbReference type="PANTHER" id="PTHR11229:SF16">
    <property type="entry name" value="LARGE RIBOSOMAL SUBUNIT PROTEIN UL3C"/>
    <property type="match status" value="1"/>
</dbReference>
<dbReference type="Pfam" id="PF00297">
    <property type="entry name" value="Ribosomal_L3"/>
    <property type="match status" value="1"/>
</dbReference>
<dbReference type="SUPFAM" id="SSF50447">
    <property type="entry name" value="Translation proteins"/>
    <property type="match status" value="1"/>
</dbReference>
<name>RL3_CHLT2</name>
<feature type="chain" id="PRO_1000141841" description="Large ribosomal subunit protein uL3">
    <location>
        <begin position="1"/>
        <end position="221"/>
    </location>
</feature>
<accession>B0B8A2</accession>
<keyword id="KW-0687">Ribonucleoprotein</keyword>
<keyword id="KW-0689">Ribosomal protein</keyword>
<keyword id="KW-0694">RNA-binding</keyword>
<keyword id="KW-0699">rRNA-binding</keyword>
<gene>
    <name evidence="1" type="primary">rplC</name>
    <name type="ordered locus">CTL0790</name>
</gene>